<organism>
    <name type="scientific">Bacteroides fragilis (strain YCH46)</name>
    <dbReference type="NCBI Taxonomy" id="295405"/>
    <lineage>
        <taxon>Bacteria</taxon>
        <taxon>Pseudomonadati</taxon>
        <taxon>Bacteroidota</taxon>
        <taxon>Bacteroidia</taxon>
        <taxon>Bacteroidales</taxon>
        <taxon>Bacteroidaceae</taxon>
        <taxon>Bacteroides</taxon>
    </lineage>
</organism>
<comment type="subunit">
    <text evidence="1">Forms oligomers.</text>
</comment>
<comment type="subcellular location">
    <subcellularLocation>
        <location evidence="1">Cytoplasm</location>
        <location evidence="1">Nucleoid</location>
    </subcellularLocation>
</comment>
<comment type="similarity">
    <text evidence="1">Belongs to the MraZ family.</text>
</comment>
<accession>Q64ZL3</accession>
<sequence>MIRFLGNIEAKADAKGRVFIPAQFRRQLQSGSEDKLIMRKDVFQDCLVLYPEEVWNEELDELRQRLNKWNANHQLIFRQFVSDVEIITMDGNGRILIPKRYLQITGIQSDVRFIGVDNKIEIWAKERAEKLFMEPKAFGAALEEIMKEERRTTNNELK</sequence>
<protein>
    <recommendedName>
        <fullName>Transcriptional regulator MraZ</fullName>
    </recommendedName>
</protein>
<keyword id="KW-0963">Cytoplasm</keyword>
<keyword id="KW-0238">DNA-binding</keyword>
<keyword id="KW-0677">Repeat</keyword>
<keyword id="KW-0804">Transcription</keyword>
<keyword id="KW-0805">Transcription regulation</keyword>
<feature type="chain" id="PRO_0000108455" description="Transcriptional regulator MraZ">
    <location>
        <begin position="1"/>
        <end position="158"/>
    </location>
</feature>
<feature type="domain" description="SpoVT-AbrB 1" evidence="2">
    <location>
        <begin position="7"/>
        <end position="54"/>
    </location>
</feature>
<feature type="domain" description="SpoVT-AbrB 2" evidence="2">
    <location>
        <begin position="84"/>
        <end position="127"/>
    </location>
</feature>
<proteinExistence type="inferred from homology"/>
<name>MRAZ_BACFR</name>
<reference key="1">
    <citation type="journal article" date="2004" name="Proc. Natl. Acad. Sci. U.S.A.">
        <title>Genomic analysis of Bacteroides fragilis reveals extensive DNA inversions regulating cell surface adaptation.</title>
        <authorList>
            <person name="Kuwahara T."/>
            <person name="Yamashita A."/>
            <person name="Hirakawa H."/>
            <person name="Nakayama H."/>
            <person name="Toh H."/>
            <person name="Okada N."/>
            <person name="Kuhara S."/>
            <person name="Hattori M."/>
            <person name="Hayashi T."/>
            <person name="Ohnishi Y."/>
        </authorList>
    </citation>
    <scope>NUCLEOTIDE SEQUENCE [LARGE SCALE GENOMIC DNA]</scope>
    <source>
        <strain>YCH46</strain>
    </source>
</reference>
<dbReference type="EMBL" id="AP006841">
    <property type="protein sequence ID" value="BAD47063.1"/>
    <property type="molecule type" value="Genomic_DNA"/>
</dbReference>
<dbReference type="RefSeq" id="WP_005801871.1">
    <property type="nucleotide sequence ID" value="NC_006347.1"/>
</dbReference>
<dbReference type="RefSeq" id="YP_097597.1">
    <property type="nucleotide sequence ID" value="NC_006347.1"/>
</dbReference>
<dbReference type="SMR" id="Q64ZL3"/>
<dbReference type="STRING" id="295405.BF0314"/>
<dbReference type="GeneID" id="60369571"/>
<dbReference type="KEGG" id="bfr:BF0314"/>
<dbReference type="PATRIC" id="fig|295405.11.peg.337"/>
<dbReference type="HOGENOM" id="CLU_107907_0_1_10"/>
<dbReference type="OrthoDB" id="9807753at2"/>
<dbReference type="Proteomes" id="UP000002197">
    <property type="component" value="Chromosome"/>
</dbReference>
<dbReference type="GO" id="GO:0005737">
    <property type="term" value="C:cytoplasm"/>
    <property type="evidence" value="ECO:0007669"/>
    <property type="project" value="UniProtKB-UniRule"/>
</dbReference>
<dbReference type="GO" id="GO:0009295">
    <property type="term" value="C:nucleoid"/>
    <property type="evidence" value="ECO:0007669"/>
    <property type="project" value="UniProtKB-SubCell"/>
</dbReference>
<dbReference type="GO" id="GO:0003700">
    <property type="term" value="F:DNA-binding transcription factor activity"/>
    <property type="evidence" value="ECO:0007669"/>
    <property type="project" value="UniProtKB-UniRule"/>
</dbReference>
<dbReference type="GO" id="GO:0000976">
    <property type="term" value="F:transcription cis-regulatory region binding"/>
    <property type="evidence" value="ECO:0007669"/>
    <property type="project" value="TreeGrafter"/>
</dbReference>
<dbReference type="GO" id="GO:2000143">
    <property type="term" value="P:negative regulation of DNA-templated transcription initiation"/>
    <property type="evidence" value="ECO:0007669"/>
    <property type="project" value="TreeGrafter"/>
</dbReference>
<dbReference type="CDD" id="cd16321">
    <property type="entry name" value="MraZ_C"/>
    <property type="match status" value="1"/>
</dbReference>
<dbReference type="CDD" id="cd16320">
    <property type="entry name" value="MraZ_N"/>
    <property type="match status" value="1"/>
</dbReference>
<dbReference type="Gene3D" id="3.40.1550.20">
    <property type="entry name" value="Transcriptional regulator MraZ domain"/>
    <property type="match status" value="1"/>
</dbReference>
<dbReference type="HAMAP" id="MF_01008">
    <property type="entry name" value="MraZ"/>
    <property type="match status" value="1"/>
</dbReference>
<dbReference type="InterPro" id="IPR003444">
    <property type="entry name" value="MraZ"/>
</dbReference>
<dbReference type="InterPro" id="IPR035644">
    <property type="entry name" value="MraZ_C"/>
</dbReference>
<dbReference type="InterPro" id="IPR020603">
    <property type="entry name" value="MraZ_dom"/>
</dbReference>
<dbReference type="InterPro" id="IPR035642">
    <property type="entry name" value="MraZ_N"/>
</dbReference>
<dbReference type="InterPro" id="IPR038619">
    <property type="entry name" value="MraZ_sf"/>
</dbReference>
<dbReference type="InterPro" id="IPR007159">
    <property type="entry name" value="SpoVT-AbrB_dom"/>
</dbReference>
<dbReference type="InterPro" id="IPR037914">
    <property type="entry name" value="SpoVT-AbrB_sf"/>
</dbReference>
<dbReference type="NCBIfam" id="NF001483">
    <property type="entry name" value="PRK00326.3-5"/>
    <property type="match status" value="1"/>
</dbReference>
<dbReference type="PANTHER" id="PTHR34701">
    <property type="entry name" value="TRANSCRIPTIONAL REGULATOR MRAZ"/>
    <property type="match status" value="1"/>
</dbReference>
<dbReference type="PANTHER" id="PTHR34701:SF1">
    <property type="entry name" value="TRANSCRIPTIONAL REGULATOR MRAZ"/>
    <property type="match status" value="1"/>
</dbReference>
<dbReference type="Pfam" id="PF02381">
    <property type="entry name" value="MraZ"/>
    <property type="match status" value="2"/>
</dbReference>
<dbReference type="SUPFAM" id="SSF89447">
    <property type="entry name" value="AbrB/MazE/MraZ-like"/>
    <property type="match status" value="1"/>
</dbReference>
<dbReference type="PROSITE" id="PS51740">
    <property type="entry name" value="SPOVT_ABRB"/>
    <property type="match status" value="2"/>
</dbReference>
<gene>
    <name evidence="1" type="primary">mraZ</name>
    <name type="ordered locus">BF0314</name>
</gene>
<evidence type="ECO:0000255" key="1">
    <source>
        <dbReference type="HAMAP-Rule" id="MF_01008"/>
    </source>
</evidence>
<evidence type="ECO:0000255" key="2">
    <source>
        <dbReference type="PROSITE-ProRule" id="PRU01076"/>
    </source>
</evidence>